<keyword id="KW-1185">Reference proteome</keyword>
<proteinExistence type="inferred from homology"/>
<organism>
    <name type="scientific">Geobacillus kaustophilus (strain HTA426)</name>
    <dbReference type="NCBI Taxonomy" id="235909"/>
    <lineage>
        <taxon>Bacteria</taxon>
        <taxon>Bacillati</taxon>
        <taxon>Bacillota</taxon>
        <taxon>Bacilli</taxon>
        <taxon>Bacillales</taxon>
        <taxon>Anoxybacillaceae</taxon>
        <taxon>Geobacillus</taxon>
        <taxon>Geobacillus thermoleovorans group</taxon>
    </lineage>
</organism>
<evidence type="ECO:0000305" key="1"/>
<comment type="similarity">
    <text evidence="1">Belongs to the bacilliredoxin family.</text>
</comment>
<gene>
    <name type="ordered locus">GK2368</name>
</gene>
<name>Y2368_GEOKA</name>
<feature type="chain" id="PRO_0000271991" description="Bacilliredoxin GK2368">
    <location>
        <begin position="1"/>
        <end position="145"/>
    </location>
</feature>
<sequence length="145" mass="16114">MFQFQFPLYNDIVEQARREAVEAGFEELRTPEDVDAAFRRPGTTLVLINSVCGCAGGIARPAAAHAVHYDKRPDHLVTVFAGQDKEATARAREYFVGEPPSSPSFALLKDGKLCAMLHRHDIEGHEPVAVVQKLQALFDEYCEEV</sequence>
<accession>Q5KXD3</accession>
<reference key="1">
    <citation type="journal article" date="2004" name="Nucleic Acids Res.">
        <title>Thermoadaptation trait revealed by the genome sequence of thermophilic Geobacillus kaustophilus.</title>
        <authorList>
            <person name="Takami H."/>
            <person name="Takaki Y."/>
            <person name="Chee G.-J."/>
            <person name="Nishi S."/>
            <person name="Shimamura S."/>
            <person name="Suzuki H."/>
            <person name="Matsui S."/>
            <person name="Uchiyama I."/>
        </authorList>
    </citation>
    <scope>NUCLEOTIDE SEQUENCE [LARGE SCALE GENOMIC DNA]</scope>
    <source>
        <strain>HTA426</strain>
    </source>
</reference>
<protein>
    <recommendedName>
        <fullName evidence="1">Bacilliredoxin GK2368</fullName>
    </recommendedName>
</protein>
<dbReference type="EMBL" id="BA000043">
    <property type="protein sequence ID" value="BAD76653.1"/>
    <property type="molecule type" value="Genomic_DNA"/>
</dbReference>
<dbReference type="RefSeq" id="WP_011231850.1">
    <property type="nucleotide sequence ID" value="NC_006510.1"/>
</dbReference>
<dbReference type="SMR" id="Q5KXD3"/>
<dbReference type="STRING" id="235909.GK2368"/>
<dbReference type="KEGG" id="gka:GK2368"/>
<dbReference type="eggNOG" id="ENOG502ZBVN">
    <property type="taxonomic scope" value="Bacteria"/>
</dbReference>
<dbReference type="HOGENOM" id="CLU_132521_0_0_9"/>
<dbReference type="Proteomes" id="UP000001172">
    <property type="component" value="Chromosome"/>
</dbReference>
<dbReference type="GO" id="GO:0045454">
    <property type="term" value="P:cell redox homeostasis"/>
    <property type="evidence" value="ECO:0000250"/>
    <property type="project" value="UniProtKB"/>
</dbReference>
<dbReference type="Gene3D" id="3.40.30.10">
    <property type="entry name" value="Glutaredoxin"/>
    <property type="match status" value="1"/>
</dbReference>
<dbReference type="InterPro" id="IPR009474">
    <property type="entry name" value="BrxB/BrxA"/>
</dbReference>
<dbReference type="NCBIfam" id="TIGR04191">
    <property type="entry name" value="YphP_YqiW"/>
    <property type="match status" value="1"/>
</dbReference>
<dbReference type="PANTHER" id="PTHR40052:SF1">
    <property type="entry name" value="BACILLIREDOXIN BRXB"/>
    <property type="match status" value="1"/>
</dbReference>
<dbReference type="PANTHER" id="PTHR40052">
    <property type="entry name" value="UPF0403 PROTEIN YQIW-RELATED"/>
    <property type="match status" value="1"/>
</dbReference>
<dbReference type="Pfam" id="PF06491">
    <property type="entry name" value="Disulph_isomer"/>
    <property type="match status" value="1"/>
</dbReference>